<reference key="1">
    <citation type="journal article" date="1998" name="J. Biol. Chem.">
        <title>cDNA cloning of mouse and human cholesterol 25-hydroxylases, polytopic membrane proteins that synthesize a potent oxysterol regulator of lipid metabolism.</title>
        <authorList>
            <person name="Lund E.G."/>
            <person name="Kerr T.A."/>
            <person name="Sakai J."/>
            <person name="Li W.-P."/>
            <person name="Russell D.W."/>
        </authorList>
    </citation>
    <scope>NUCLEOTIDE SEQUENCE [GENOMIC DNA / MRNA]</scope>
    <scope>FUNCTION</scope>
    <scope>GLYCOSYLATION</scope>
    <scope>CATALYTIC ACTIVITY</scope>
    <source>
        <tissue>Lung</tissue>
    </source>
</reference>
<reference key="2">
    <citation type="journal article" date="2004" name="Nat. Genet.">
        <title>Complete sequencing and characterization of 21,243 full-length human cDNAs.</title>
        <authorList>
            <person name="Ota T."/>
            <person name="Suzuki Y."/>
            <person name="Nishikawa T."/>
            <person name="Otsuki T."/>
            <person name="Sugiyama T."/>
            <person name="Irie R."/>
            <person name="Wakamatsu A."/>
            <person name="Hayashi K."/>
            <person name="Sato H."/>
            <person name="Nagai K."/>
            <person name="Kimura K."/>
            <person name="Makita H."/>
            <person name="Sekine M."/>
            <person name="Obayashi M."/>
            <person name="Nishi T."/>
            <person name="Shibahara T."/>
            <person name="Tanaka T."/>
            <person name="Ishii S."/>
            <person name="Yamamoto J."/>
            <person name="Saito K."/>
            <person name="Kawai Y."/>
            <person name="Isono Y."/>
            <person name="Nakamura Y."/>
            <person name="Nagahari K."/>
            <person name="Murakami K."/>
            <person name="Yasuda T."/>
            <person name="Iwayanagi T."/>
            <person name="Wagatsuma M."/>
            <person name="Shiratori A."/>
            <person name="Sudo H."/>
            <person name="Hosoiri T."/>
            <person name="Kaku Y."/>
            <person name="Kodaira H."/>
            <person name="Kondo H."/>
            <person name="Sugawara M."/>
            <person name="Takahashi M."/>
            <person name="Kanda K."/>
            <person name="Yokoi T."/>
            <person name="Furuya T."/>
            <person name="Kikkawa E."/>
            <person name="Omura Y."/>
            <person name="Abe K."/>
            <person name="Kamihara K."/>
            <person name="Katsuta N."/>
            <person name="Sato K."/>
            <person name="Tanikawa M."/>
            <person name="Yamazaki M."/>
            <person name="Ninomiya K."/>
            <person name="Ishibashi T."/>
            <person name="Yamashita H."/>
            <person name="Murakawa K."/>
            <person name="Fujimori K."/>
            <person name="Tanai H."/>
            <person name="Kimata M."/>
            <person name="Watanabe M."/>
            <person name="Hiraoka S."/>
            <person name="Chiba Y."/>
            <person name="Ishida S."/>
            <person name="Ono Y."/>
            <person name="Takiguchi S."/>
            <person name="Watanabe S."/>
            <person name="Yosida M."/>
            <person name="Hotuta T."/>
            <person name="Kusano J."/>
            <person name="Kanehori K."/>
            <person name="Takahashi-Fujii A."/>
            <person name="Hara H."/>
            <person name="Tanase T.-O."/>
            <person name="Nomura Y."/>
            <person name="Togiya S."/>
            <person name="Komai F."/>
            <person name="Hara R."/>
            <person name="Takeuchi K."/>
            <person name="Arita M."/>
            <person name="Imose N."/>
            <person name="Musashino K."/>
            <person name="Yuuki H."/>
            <person name="Oshima A."/>
            <person name="Sasaki N."/>
            <person name="Aotsuka S."/>
            <person name="Yoshikawa Y."/>
            <person name="Matsunawa H."/>
            <person name="Ichihara T."/>
            <person name="Shiohata N."/>
            <person name="Sano S."/>
            <person name="Moriya S."/>
            <person name="Momiyama H."/>
            <person name="Satoh N."/>
            <person name="Takami S."/>
            <person name="Terashima Y."/>
            <person name="Suzuki O."/>
            <person name="Nakagawa S."/>
            <person name="Senoh A."/>
            <person name="Mizoguchi H."/>
            <person name="Goto Y."/>
            <person name="Shimizu F."/>
            <person name="Wakebe H."/>
            <person name="Hishigaki H."/>
            <person name="Watanabe T."/>
            <person name="Sugiyama A."/>
            <person name="Takemoto M."/>
            <person name="Kawakami B."/>
            <person name="Yamazaki M."/>
            <person name="Watanabe K."/>
            <person name="Kumagai A."/>
            <person name="Itakura S."/>
            <person name="Fukuzumi Y."/>
            <person name="Fujimori Y."/>
            <person name="Komiyama M."/>
            <person name="Tashiro H."/>
            <person name="Tanigami A."/>
            <person name="Fujiwara T."/>
            <person name="Ono T."/>
            <person name="Yamada K."/>
            <person name="Fujii Y."/>
            <person name="Ozaki K."/>
            <person name="Hirao M."/>
            <person name="Ohmori Y."/>
            <person name="Kawabata A."/>
            <person name="Hikiji T."/>
            <person name="Kobatake N."/>
            <person name="Inagaki H."/>
            <person name="Ikema Y."/>
            <person name="Okamoto S."/>
            <person name="Okitani R."/>
            <person name="Kawakami T."/>
            <person name="Noguchi S."/>
            <person name="Itoh T."/>
            <person name="Shigeta K."/>
            <person name="Senba T."/>
            <person name="Matsumura K."/>
            <person name="Nakajima Y."/>
            <person name="Mizuno T."/>
            <person name="Morinaga M."/>
            <person name="Sasaki M."/>
            <person name="Togashi T."/>
            <person name="Oyama M."/>
            <person name="Hata H."/>
            <person name="Watanabe M."/>
            <person name="Komatsu T."/>
            <person name="Mizushima-Sugano J."/>
            <person name="Satoh T."/>
            <person name="Shirai Y."/>
            <person name="Takahashi Y."/>
            <person name="Nakagawa K."/>
            <person name="Okumura K."/>
            <person name="Nagase T."/>
            <person name="Nomura N."/>
            <person name="Kikuchi H."/>
            <person name="Masuho Y."/>
            <person name="Yamashita R."/>
            <person name="Nakai K."/>
            <person name="Yada T."/>
            <person name="Nakamura Y."/>
            <person name="Ohara O."/>
            <person name="Isogai T."/>
            <person name="Sugano S."/>
        </authorList>
    </citation>
    <scope>NUCLEOTIDE SEQUENCE [LARGE SCALE MRNA]</scope>
    <source>
        <tissue>Heart</tissue>
    </source>
</reference>
<reference key="3">
    <citation type="journal article" date="2004" name="Nature">
        <title>The DNA sequence and comparative analysis of human chromosome 10.</title>
        <authorList>
            <person name="Deloukas P."/>
            <person name="Earthrowl M.E."/>
            <person name="Grafham D.V."/>
            <person name="Rubenfield M."/>
            <person name="French L."/>
            <person name="Steward C.A."/>
            <person name="Sims S.K."/>
            <person name="Jones M.C."/>
            <person name="Searle S."/>
            <person name="Scott C."/>
            <person name="Howe K."/>
            <person name="Hunt S.E."/>
            <person name="Andrews T.D."/>
            <person name="Gilbert J.G.R."/>
            <person name="Swarbreck D."/>
            <person name="Ashurst J.L."/>
            <person name="Taylor A."/>
            <person name="Battles J."/>
            <person name="Bird C.P."/>
            <person name="Ainscough R."/>
            <person name="Almeida J.P."/>
            <person name="Ashwell R.I.S."/>
            <person name="Ambrose K.D."/>
            <person name="Babbage A.K."/>
            <person name="Bagguley C.L."/>
            <person name="Bailey J."/>
            <person name="Banerjee R."/>
            <person name="Bates K."/>
            <person name="Beasley H."/>
            <person name="Bray-Allen S."/>
            <person name="Brown A.J."/>
            <person name="Brown J.Y."/>
            <person name="Burford D.C."/>
            <person name="Burrill W."/>
            <person name="Burton J."/>
            <person name="Cahill P."/>
            <person name="Camire D."/>
            <person name="Carter N.P."/>
            <person name="Chapman J.C."/>
            <person name="Clark S.Y."/>
            <person name="Clarke G."/>
            <person name="Clee C.M."/>
            <person name="Clegg S."/>
            <person name="Corby N."/>
            <person name="Coulson A."/>
            <person name="Dhami P."/>
            <person name="Dutta I."/>
            <person name="Dunn M."/>
            <person name="Faulkner L."/>
            <person name="Frankish A."/>
            <person name="Frankland J.A."/>
            <person name="Garner P."/>
            <person name="Garnett J."/>
            <person name="Gribble S."/>
            <person name="Griffiths C."/>
            <person name="Grocock R."/>
            <person name="Gustafson E."/>
            <person name="Hammond S."/>
            <person name="Harley J.L."/>
            <person name="Hart E."/>
            <person name="Heath P.D."/>
            <person name="Ho T.P."/>
            <person name="Hopkins B."/>
            <person name="Horne J."/>
            <person name="Howden P.J."/>
            <person name="Huckle E."/>
            <person name="Hynds C."/>
            <person name="Johnson C."/>
            <person name="Johnson D."/>
            <person name="Kana A."/>
            <person name="Kay M."/>
            <person name="Kimberley A.M."/>
            <person name="Kershaw J.K."/>
            <person name="Kokkinaki M."/>
            <person name="Laird G.K."/>
            <person name="Lawlor S."/>
            <person name="Lee H.M."/>
            <person name="Leongamornlert D.A."/>
            <person name="Laird G."/>
            <person name="Lloyd C."/>
            <person name="Lloyd D.M."/>
            <person name="Loveland J."/>
            <person name="Lovell J."/>
            <person name="McLaren S."/>
            <person name="McLay K.E."/>
            <person name="McMurray A."/>
            <person name="Mashreghi-Mohammadi M."/>
            <person name="Matthews L."/>
            <person name="Milne S."/>
            <person name="Nickerson T."/>
            <person name="Nguyen M."/>
            <person name="Overton-Larty E."/>
            <person name="Palmer S.A."/>
            <person name="Pearce A.V."/>
            <person name="Peck A.I."/>
            <person name="Pelan S."/>
            <person name="Phillimore B."/>
            <person name="Porter K."/>
            <person name="Rice C.M."/>
            <person name="Rogosin A."/>
            <person name="Ross M.T."/>
            <person name="Sarafidou T."/>
            <person name="Sehra H.K."/>
            <person name="Shownkeen R."/>
            <person name="Skuce C.D."/>
            <person name="Smith M."/>
            <person name="Standring L."/>
            <person name="Sycamore N."/>
            <person name="Tester J."/>
            <person name="Thorpe A."/>
            <person name="Torcasso W."/>
            <person name="Tracey A."/>
            <person name="Tromans A."/>
            <person name="Tsolas J."/>
            <person name="Wall M."/>
            <person name="Walsh J."/>
            <person name="Wang H."/>
            <person name="Weinstock K."/>
            <person name="West A.P."/>
            <person name="Willey D.L."/>
            <person name="Whitehead S.L."/>
            <person name="Wilming L."/>
            <person name="Wray P.W."/>
            <person name="Young L."/>
            <person name="Chen Y."/>
            <person name="Lovering R.C."/>
            <person name="Moschonas N.K."/>
            <person name="Siebert R."/>
            <person name="Fechtel K."/>
            <person name="Bentley D."/>
            <person name="Durbin R.M."/>
            <person name="Hubbard T."/>
            <person name="Doucette-Stamm L."/>
            <person name="Beck S."/>
            <person name="Smith D.R."/>
            <person name="Rogers J."/>
        </authorList>
    </citation>
    <scope>NUCLEOTIDE SEQUENCE [LARGE SCALE GENOMIC DNA]</scope>
</reference>
<reference key="4">
    <citation type="submission" date="2005-09" db="EMBL/GenBank/DDBJ databases">
        <authorList>
            <person name="Mural R.J."/>
            <person name="Istrail S."/>
            <person name="Sutton G.G."/>
            <person name="Florea L."/>
            <person name="Halpern A.L."/>
            <person name="Mobarry C.M."/>
            <person name="Lippert R."/>
            <person name="Walenz B."/>
            <person name="Shatkay H."/>
            <person name="Dew I."/>
            <person name="Miller J.R."/>
            <person name="Flanigan M.J."/>
            <person name="Edwards N.J."/>
            <person name="Bolanos R."/>
            <person name="Fasulo D."/>
            <person name="Halldorsson B.V."/>
            <person name="Hannenhalli S."/>
            <person name="Turner R."/>
            <person name="Yooseph S."/>
            <person name="Lu F."/>
            <person name="Nusskern D.R."/>
            <person name="Shue B.C."/>
            <person name="Zheng X.H."/>
            <person name="Zhong F."/>
            <person name="Delcher A.L."/>
            <person name="Huson D.H."/>
            <person name="Kravitz S.A."/>
            <person name="Mouchard L."/>
            <person name="Reinert K."/>
            <person name="Remington K.A."/>
            <person name="Clark A.G."/>
            <person name="Waterman M.S."/>
            <person name="Eichler E.E."/>
            <person name="Adams M.D."/>
            <person name="Hunkapiller M.W."/>
            <person name="Myers E.W."/>
            <person name="Venter J.C."/>
        </authorList>
    </citation>
    <scope>NUCLEOTIDE SEQUENCE [LARGE SCALE GENOMIC DNA]</scope>
</reference>
<reference key="5">
    <citation type="journal article" date="2004" name="Genome Res.">
        <title>The status, quality, and expansion of the NIH full-length cDNA project: the Mammalian Gene Collection (MGC).</title>
        <authorList>
            <consortium name="The MGC Project Team"/>
        </authorList>
    </citation>
    <scope>NUCLEOTIDE SEQUENCE [LARGE SCALE MRNA]</scope>
    <source>
        <tissue>Lung</tissue>
        <tissue>Ovary</tissue>
    </source>
</reference>
<reference key="6">
    <citation type="journal article" date="2004" name="Neurobiol. Aging">
        <title>Association analysis of genes involved in cholesterol metabolism located within the linkage region on chromosome 10 and Alzheimer's disease.</title>
        <authorList>
            <person name="Riemenschneider M."/>
            <person name="Mahmoodzadeh S."/>
            <person name="Eisele T."/>
            <person name="Klopp N."/>
            <person name="Schwarz S."/>
            <person name="Wagenpfeil S."/>
            <person name="Diehl J."/>
            <person name="Mueller U."/>
            <person name="Foerstl H."/>
            <person name="Illig T."/>
            <person name="Kurz A."/>
        </authorList>
    </citation>
    <scope>LACK OF INVOLVEMENT IN ALZHEIMER DISEASE</scope>
</reference>
<reference key="7">
    <citation type="journal article" date="2006" name="Neurosci. Lett.">
        <title>Association studies of cholesterol metabolism genes (CH25H, ABCA1 and CH24H) in Alzheimer's disease.</title>
        <authorList>
            <person name="Shibata N."/>
            <person name="Kawarai T."/>
            <person name="Lee J.H."/>
            <person name="Lee H.-S."/>
            <person name="Shibata E."/>
            <person name="Sato C."/>
            <person name="Liang Y."/>
            <person name="Duara R."/>
            <person name="Mayeux R.P."/>
            <person name="St George-Hyslop P.H."/>
            <person name="Rogaeva E."/>
        </authorList>
    </citation>
    <scope>LACK OF INVOLVEMENT IN ALZHEIMER DISEASE</scope>
</reference>
<reference key="8">
    <citation type="journal article" date="2020" name="EMBO J.">
        <title>Cholesterol 25-Hydroxylase inhibits SARS-CoV-2 and other coronaviruses by depleting membrane cholesterol.</title>
        <authorList>
            <person name="Wang S."/>
            <person name="Li W."/>
            <person name="Hui H."/>
            <person name="Tiwari S.K."/>
            <person name="Zhang Q."/>
            <person name="Croker B.A."/>
            <person name="Rawlings S."/>
            <person name="Smith D."/>
            <person name="Carlin A.F."/>
            <person name="Rana T.M."/>
        </authorList>
    </citation>
    <scope>FUNCTION</scope>
    <scope>INDUCTION BY IFN</scope>
</reference>
<reference key="9">
    <citation type="journal article" date="2020" name="Proc. Natl. Acad. Sci. U.S.A.">
        <title>Cholesterol 25-hydroxylase suppresses SARS-CoV-2 replication by blocking membrane fusion.</title>
        <authorList>
            <person name="Zang R."/>
            <person name="Case J.B."/>
            <person name="Yutuc E."/>
            <person name="Ma X."/>
            <person name="Shen S."/>
            <person name="Gomez Castro M.F."/>
            <person name="Liu Z."/>
            <person name="Zeng Q."/>
            <person name="Zhao H."/>
            <person name="Son J."/>
            <person name="Rothlauf P.W."/>
            <person name="Kreutzberger A.J.B."/>
            <person name="Hou G."/>
            <person name="Zhang H."/>
            <person name="Bose S."/>
            <person name="Wang X."/>
            <person name="Vahey M.D."/>
            <person name="Mani K."/>
            <person name="Griffiths W.J."/>
            <person name="Kirchhausen T."/>
            <person name="Fremont D.H."/>
            <person name="Guo H."/>
            <person name="Diwan A."/>
            <person name="Wang Y."/>
            <person name="Diamond M.S."/>
            <person name="Whelan S.P.J."/>
            <person name="Ding S."/>
        </authorList>
    </citation>
    <scope>FUNCTION</scope>
    <scope>MUTAGENESIS OF 242-HIS-HIS-243</scope>
    <scope>CATALYTIC ACTIVITY</scope>
</reference>
<accession>O95992</accession>
<accession>B2RBY3</accession>
<protein>
    <recommendedName>
        <fullName evidence="7">Cholesterol 25-hydroxylase</fullName>
        <ecNumber evidence="5 6">1.14.99.38</ecNumber>
    </recommendedName>
    <alternativeName>
        <fullName>Cholesterol 25-monooxygenase</fullName>
        <shortName>h25OH</shortName>
    </alternativeName>
</protein>
<feature type="chain" id="PRO_0000226801" description="Cholesterol 25-hydroxylase">
    <location>
        <begin position="1"/>
        <end position="272"/>
    </location>
</feature>
<feature type="transmembrane region" description="Helical" evidence="3">
    <location>
        <begin position="38"/>
        <end position="58"/>
    </location>
</feature>
<feature type="transmembrane region" description="Helical" evidence="3">
    <location>
        <begin position="84"/>
        <end position="104"/>
    </location>
</feature>
<feature type="transmembrane region" description="Helical" evidence="3">
    <location>
        <begin position="121"/>
        <end position="141"/>
    </location>
</feature>
<feature type="domain" description="Fatty acid hydroxylase" evidence="3">
    <location>
        <begin position="129"/>
        <end position="263"/>
    </location>
</feature>
<feature type="short sequence motif" description="Histidine box-1">
    <location>
        <begin position="142"/>
        <end position="146"/>
    </location>
</feature>
<feature type="short sequence motif" description="Histidine box-2">
    <location>
        <begin position="157"/>
        <end position="161"/>
    </location>
</feature>
<feature type="short sequence motif" description="Histidine box-3">
    <location>
        <begin position="238"/>
        <end position="244"/>
    </location>
</feature>
<feature type="glycosylation site" description="N-linked (GlcNAc...) asparagine" evidence="3">
    <location>
        <position position="5"/>
    </location>
</feature>
<feature type="glycosylation site" description="N-linked (GlcNAc...) asparagine" evidence="3">
    <location>
        <position position="163"/>
    </location>
</feature>
<feature type="glycosylation site" description="N-linked (GlcNAc...) asparagine" evidence="3">
    <location>
        <position position="189"/>
    </location>
</feature>
<feature type="sequence variant" id="VAR_048899" description="In dbSNP:rs17117295.">
    <original>L</original>
    <variation>P</variation>
    <location>
        <position position="133"/>
    </location>
</feature>
<feature type="mutagenesis site" description="Loss of cholesterol 25-hydroxylase activity. Loss of inhibition of infection by SARS-COV-2." evidence="5">
    <original>HH</original>
    <variation>QQ</variation>
    <location>
        <begin position="242"/>
        <end position="243"/>
    </location>
</feature>
<proteinExistence type="evidence at protein level"/>
<evidence type="ECO:0000250" key="1">
    <source>
        <dbReference type="UniProtKB" id="Q4QQV7"/>
    </source>
</evidence>
<evidence type="ECO:0000250" key="2">
    <source>
        <dbReference type="UniProtKB" id="Q9Z0F5"/>
    </source>
</evidence>
<evidence type="ECO:0000255" key="3"/>
<evidence type="ECO:0000269" key="4">
    <source>
    </source>
</evidence>
<evidence type="ECO:0000269" key="5">
    <source>
    </source>
</evidence>
<evidence type="ECO:0000269" key="6">
    <source>
    </source>
</evidence>
<evidence type="ECO:0000305" key="7"/>
<evidence type="ECO:0000305" key="8">
    <source>
    </source>
</evidence>
<evidence type="ECO:0000312" key="9">
    <source>
        <dbReference type="HGNC" id="HGNC:1907"/>
    </source>
</evidence>
<keyword id="KW-0256">Endoplasmic reticulum</keyword>
<keyword id="KW-0325">Glycoprotein</keyword>
<keyword id="KW-0408">Iron</keyword>
<keyword id="KW-0444">Lipid biosynthesis</keyword>
<keyword id="KW-0443">Lipid metabolism</keyword>
<keyword id="KW-0472">Membrane</keyword>
<keyword id="KW-0479">Metal-binding</keyword>
<keyword id="KW-0503">Monooxygenase</keyword>
<keyword id="KW-0560">Oxidoreductase</keyword>
<keyword id="KW-1185">Reference proteome</keyword>
<keyword id="KW-0752">Steroid biosynthesis</keyword>
<keyword id="KW-0753">Steroid metabolism</keyword>
<keyword id="KW-0756">Sterol biosynthesis</keyword>
<keyword id="KW-1207">Sterol metabolism</keyword>
<keyword id="KW-0812">Transmembrane</keyword>
<keyword id="KW-1133">Transmembrane helix</keyword>
<comment type="function">
    <text evidence="1 2 4 5 6">Catalyzes the formation of 25-hydroxycholesterol from cholesterol, leading to repress cholesterol biosynthetic enzymes (PubMed:9852097). Plays a key role in cell positioning and movement in lymphoid tissues: 25-hydroxycholesterol is an intermediate in biosynthesis of 7-alpha,25-dihydroxycholesterol (7-alpha,25-OHC), an oxysterol that acts as a ligand for the G protein-coupled receptor GPR183/EBI2, a chemotactic receptor for a number of lymphoid cells (By similarity). May play an important role in regulating lipid metabolism by synthesizing a corepressor that blocks sterol regulatory element binding protein (SREBP) processing (PubMed:9852097). As an interferon-stimulated gene, has broad antiviral activities against a wide range of enveloped viruses, such as vesicular stomatitis virus (VSV) and SARS coronavirus-2 (SARS-CoV-2). Its product, 25-hydroxycholesterol, activates the ER-localized enzyme ACAT to induce internalization of accessible cholesterol on the plasma membrane and restricts SARS-CoV-2 S protein-mediated fusion which inhibits virus replication (PubMed:32944968, PubMed:33239446). In testis, production of 25-hydroxycholesterol by macrophages plays a role in Leydig cell differentiation (By similarity). Required to restrain inflammation in macrophages: production of 25-hydroxycholesterol protects macrophages from cholesterol overload, thereby preventing mitochondrial DNA release and subsequent activation of the AIM2 inflammasome (By similarity).</text>
</comment>
<comment type="catalytic activity">
    <reaction evidence="5 6">
        <text>cholesterol + AH2 + O2 = 25-hydroxycholesterol + A + H2O</text>
        <dbReference type="Rhea" id="RHEA:21104"/>
        <dbReference type="ChEBI" id="CHEBI:13193"/>
        <dbReference type="ChEBI" id="CHEBI:15377"/>
        <dbReference type="ChEBI" id="CHEBI:15379"/>
        <dbReference type="ChEBI" id="CHEBI:16113"/>
        <dbReference type="ChEBI" id="CHEBI:17499"/>
        <dbReference type="ChEBI" id="CHEBI:42977"/>
        <dbReference type="EC" id="1.14.99.38"/>
    </reaction>
    <physiologicalReaction direction="left-to-right" evidence="5 8">
        <dbReference type="Rhea" id="RHEA:21105"/>
    </physiologicalReaction>
</comment>
<comment type="catalytic activity">
    <reaction evidence="6">
        <text>cholesterol + NADPH + O2 + H(+) = 25-hydroxycholesterol + NADP(+) + H2O</text>
        <dbReference type="Rhea" id="RHEA:46132"/>
        <dbReference type="ChEBI" id="CHEBI:15377"/>
        <dbReference type="ChEBI" id="CHEBI:15378"/>
        <dbReference type="ChEBI" id="CHEBI:15379"/>
        <dbReference type="ChEBI" id="CHEBI:16113"/>
        <dbReference type="ChEBI" id="CHEBI:42977"/>
        <dbReference type="ChEBI" id="CHEBI:57783"/>
        <dbReference type="ChEBI" id="CHEBI:58349"/>
    </reaction>
    <physiologicalReaction direction="left-to-right" evidence="8">
        <dbReference type="Rhea" id="RHEA:46133"/>
    </physiologicalReaction>
</comment>
<comment type="cofactor">
    <cofactor evidence="2">
        <name>Fe cation</name>
        <dbReference type="ChEBI" id="CHEBI:24875"/>
    </cofactor>
</comment>
<comment type="interaction">
    <interactant intactId="EBI-12820943">
        <id>O95992</id>
    </interactant>
    <interactant intactId="EBI-10176396">
        <id>P60329</id>
        <label>KRTAP12-4</label>
    </interactant>
    <organismsDiffer>false</organismsDiffer>
    <experiments>3</experiments>
</comment>
<comment type="interaction">
    <interactant intactId="EBI-12820943">
        <id>O95992</id>
    </interactant>
    <interactant intactId="EBI-740446">
        <id>P32242</id>
        <label>OTX1</label>
    </interactant>
    <organismsDiffer>false</organismsDiffer>
    <experiments>3</experiments>
</comment>
<comment type="subcellular location">
    <subcellularLocation>
        <location evidence="2">Endoplasmic reticulum membrane</location>
        <topology evidence="2">Multi-pass membrane protein</topology>
    </subcellularLocation>
</comment>
<comment type="induction">
    <text evidence="4">Induced by interferon (IFN) upon infection by virus like SARS-CoV-2.</text>
</comment>
<comment type="PTM">
    <text evidence="6">N-glycosylated.</text>
</comment>
<comment type="similarity">
    <text evidence="7">Belongs to the sterol desaturase family.</text>
</comment>
<sequence length="272" mass="31745">MSCHNCSDPQVLCSSGQLFLQPLWDHLRSWEALLQSPFFPVIFSITTYVGFCLPFVVLDILCSWVPALRRYKIHPDFSPSAQQLLPCLGQTLYQHVMFVFPVTLLHWARSPALLPHEAPELLLLLHHILFCLLLFDMEFFVWHLLHHKVPWLYRTFHKVHHQNSSSFALATQYMSVWELFSLGFFDMMNVTLLGCHPLTTLTFHVVNIWLSVEDHSGYNFPWSTHRLVPFGWYGGVVHHDLHHSHFNCNFAPYFTHWDKILGTLRTASVPAR</sequence>
<dbReference type="EC" id="1.14.99.38" evidence="5 6"/>
<dbReference type="EMBL" id="AF059212">
    <property type="protein sequence ID" value="AAC97481.1"/>
    <property type="molecule type" value="Genomic_DNA"/>
</dbReference>
<dbReference type="EMBL" id="AF059214">
    <property type="protein sequence ID" value="AAC97483.1"/>
    <property type="molecule type" value="mRNA"/>
</dbReference>
<dbReference type="EMBL" id="AK314865">
    <property type="protein sequence ID" value="BAG37380.1"/>
    <property type="molecule type" value="mRNA"/>
</dbReference>
<dbReference type="EMBL" id="AL513533">
    <property type="status" value="NOT_ANNOTATED_CDS"/>
    <property type="molecule type" value="Genomic_DNA"/>
</dbReference>
<dbReference type="EMBL" id="CH471066">
    <property type="protein sequence ID" value="EAW50146.1"/>
    <property type="molecule type" value="Genomic_DNA"/>
</dbReference>
<dbReference type="EMBL" id="BC017843">
    <property type="protein sequence ID" value="AAH17843.1"/>
    <property type="molecule type" value="mRNA"/>
</dbReference>
<dbReference type="EMBL" id="BC072430">
    <property type="protein sequence ID" value="AAH72430.1"/>
    <property type="molecule type" value="mRNA"/>
</dbReference>
<dbReference type="CCDS" id="CCDS7400.1"/>
<dbReference type="RefSeq" id="NP_003947.1">
    <property type="nucleotide sequence ID" value="NM_003956.4"/>
</dbReference>
<dbReference type="BioGRID" id="114490">
    <property type="interactions" value="4"/>
</dbReference>
<dbReference type="FunCoup" id="O95992">
    <property type="interactions" value="530"/>
</dbReference>
<dbReference type="IntAct" id="O95992">
    <property type="interactions" value="4"/>
</dbReference>
<dbReference type="MINT" id="O95992"/>
<dbReference type="STRING" id="9606.ENSP00000360918"/>
<dbReference type="SwissLipids" id="SLP:000001483"/>
<dbReference type="GlyCosmos" id="O95992">
    <property type="glycosylation" value="3 sites, No reported glycans"/>
</dbReference>
<dbReference type="GlyGen" id="O95992">
    <property type="glycosylation" value="3 sites"/>
</dbReference>
<dbReference type="BioMuta" id="CH25H"/>
<dbReference type="PaxDb" id="9606-ENSP00000360918"/>
<dbReference type="PeptideAtlas" id="O95992"/>
<dbReference type="Antibodypedia" id="30238">
    <property type="antibodies" value="104 antibodies from 16 providers"/>
</dbReference>
<dbReference type="DNASU" id="9023"/>
<dbReference type="Ensembl" id="ENST00000371852.4">
    <property type="protein sequence ID" value="ENSP00000360918.2"/>
    <property type="gene ID" value="ENSG00000138135.7"/>
</dbReference>
<dbReference type="GeneID" id="9023"/>
<dbReference type="KEGG" id="hsa:9023"/>
<dbReference type="MANE-Select" id="ENST00000371852.4">
    <property type="protein sequence ID" value="ENSP00000360918.2"/>
    <property type="RefSeq nucleotide sequence ID" value="NM_003956.4"/>
    <property type="RefSeq protein sequence ID" value="NP_003947.1"/>
</dbReference>
<dbReference type="UCSC" id="uc001kfz.4">
    <property type="organism name" value="human"/>
</dbReference>
<dbReference type="AGR" id="HGNC:1907"/>
<dbReference type="CTD" id="9023"/>
<dbReference type="DisGeNET" id="9023"/>
<dbReference type="GeneCards" id="CH25H"/>
<dbReference type="HGNC" id="HGNC:1907">
    <property type="gene designation" value="CH25H"/>
</dbReference>
<dbReference type="HPA" id="ENSG00000138135">
    <property type="expression patterns" value="Tissue enhanced (lymphoid)"/>
</dbReference>
<dbReference type="MIM" id="604551">
    <property type="type" value="gene"/>
</dbReference>
<dbReference type="neXtProt" id="NX_O95992"/>
<dbReference type="OpenTargets" id="ENSG00000138135"/>
<dbReference type="PharmGKB" id="PA26443"/>
<dbReference type="VEuPathDB" id="HostDB:ENSG00000138135"/>
<dbReference type="eggNOG" id="KOG0873">
    <property type="taxonomic scope" value="Eukaryota"/>
</dbReference>
<dbReference type="GeneTree" id="ENSGT00940000162142"/>
<dbReference type="HOGENOM" id="CLU_047036_5_1_1"/>
<dbReference type="InParanoid" id="O95992"/>
<dbReference type="OMA" id="VPWLYKT"/>
<dbReference type="OrthoDB" id="1658724at2759"/>
<dbReference type="PAN-GO" id="O95992">
    <property type="GO annotations" value="5 GO annotations based on evolutionary models"/>
</dbReference>
<dbReference type="PhylomeDB" id="O95992"/>
<dbReference type="TreeFam" id="TF353265"/>
<dbReference type="BioCyc" id="MetaCyc:HS06462-MONOMER"/>
<dbReference type="BRENDA" id="1.14.99.38">
    <property type="organism ID" value="2681"/>
</dbReference>
<dbReference type="PathwayCommons" id="O95992"/>
<dbReference type="Reactome" id="R-HSA-192105">
    <property type="pathway name" value="Synthesis of bile acids and bile salts"/>
</dbReference>
<dbReference type="SignaLink" id="O95992"/>
<dbReference type="BioGRID-ORCS" id="9023">
    <property type="hits" value="13 hits in 1145 CRISPR screens"/>
</dbReference>
<dbReference type="GenomeRNAi" id="9023"/>
<dbReference type="Pharos" id="O95992">
    <property type="development level" value="Tbio"/>
</dbReference>
<dbReference type="PRO" id="PR:O95992"/>
<dbReference type="Proteomes" id="UP000005640">
    <property type="component" value="Chromosome 10"/>
</dbReference>
<dbReference type="RNAct" id="O95992">
    <property type="molecule type" value="protein"/>
</dbReference>
<dbReference type="Bgee" id="ENSG00000138135">
    <property type="expression patterns" value="Expressed in mucosa of paranasal sinus and 157 other cell types or tissues"/>
</dbReference>
<dbReference type="GO" id="GO:0005829">
    <property type="term" value="C:cytosol"/>
    <property type="evidence" value="ECO:0000304"/>
    <property type="project" value="Reactome"/>
</dbReference>
<dbReference type="GO" id="GO:0005789">
    <property type="term" value="C:endoplasmic reticulum membrane"/>
    <property type="evidence" value="ECO:0000318"/>
    <property type="project" value="GO_Central"/>
</dbReference>
<dbReference type="GO" id="GO:0000254">
    <property type="term" value="F:C-4 methylsterol oxidase activity"/>
    <property type="evidence" value="ECO:0000318"/>
    <property type="project" value="GO_Central"/>
</dbReference>
<dbReference type="GO" id="GO:0001567">
    <property type="term" value="F:cholesterol 25-hydroxylase activity"/>
    <property type="evidence" value="ECO:0000314"/>
    <property type="project" value="UniProtKB"/>
</dbReference>
<dbReference type="GO" id="GO:0005506">
    <property type="term" value="F:iron ion binding"/>
    <property type="evidence" value="ECO:0007669"/>
    <property type="project" value="InterPro"/>
</dbReference>
<dbReference type="GO" id="GO:0008395">
    <property type="term" value="F:steroid hydroxylase activity"/>
    <property type="evidence" value="ECO:0000318"/>
    <property type="project" value="GO_Central"/>
</dbReference>
<dbReference type="GO" id="GO:0035754">
    <property type="term" value="P:B cell chemotaxis"/>
    <property type="evidence" value="ECO:0000250"/>
    <property type="project" value="UniProtKB"/>
</dbReference>
<dbReference type="GO" id="GO:0008203">
    <property type="term" value="P:cholesterol metabolic process"/>
    <property type="evidence" value="ECO:0000314"/>
    <property type="project" value="UniProtKB"/>
</dbReference>
<dbReference type="GO" id="GO:0006629">
    <property type="term" value="P:lipid metabolic process"/>
    <property type="evidence" value="ECO:0000304"/>
    <property type="project" value="ProtInc"/>
</dbReference>
<dbReference type="GO" id="GO:0090206">
    <property type="term" value="P:negative regulation of cholesterol metabolic process"/>
    <property type="evidence" value="ECO:0007669"/>
    <property type="project" value="Ensembl"/>
</dbReference>
<dbReference type="GO" id="GO:1903914">
    <property type="term" value="P:negative regulation of fusion of virus membrane with host plasma membrane"/>
    <property type="evidence" value="ECO:0000314"/>
    <property type="project" value="UniProtKB"/>
</dbReference>
<dbReference type="GO" id="GO:0034340">
    <property type="term" value="P:response to type I interferon"/>
    <property type="evidence" value="ECO:0000314"/>
    <property type="project" value="UniProtKB"/>
</dbReference>
<dbReference type="GO" id="GO:0016126">
    <property type="term" value="P:sterol biosynthetic process"/>
    <property type="evidence" value="ECO:0000318"/>
    <property type="project" value="GO_Central"/>
</dbReference>
<dbReference type="InterPro" id="IPR006694">
    <property type="entry name" value="Fatty_acid_hydroxylase"/>
</dbReference>
<dbReference type="InterPro" id="IPR050307">
    <property type="entry name" value="Sterol_Desaturase_Related"/>
</dbReference>
<dbReference type="PANTHER" id="PTHR11863">
    <property type="entry name" value="STEROL DESATURASE"/>
    <property type="match status" value="1"/>
</dbReference>
<dbReference type="Pfam" id="PF04116">
    <property type="entry name" value="FA_hydroxylase"/>
    <property type="match status" value="1"/>
</dbReference>
<gene>
    <name evidence="9" type="primary">CH25H</name>
</gene>
<name>CH25H_HUMAN</name>
<organism>
    <name type="scientific">Homo sapiens</name>
    <name type="common">Human</name>
    <dbReference type="NCBI Taxonomy" id="9606"/>
    <lineage>
        <taxon>Eukaryota</taxon>
        <taxon>Metazoa</taxon>
        <taxon>Chordata</taxon>
        <taxon>Craniata</taxon>
        <taxon>Vertebrata</taxon>
        <taxon>Euteleostomi</taxon>
        <taxon>Mammalia</taxon>
        <taxon>Eutheria</taxon>
        <taxon>Euarchontoglires</taxon>
        <taxon>Primates</taxon>
        <taxon>Haplorrhini</taxon>
        <taxon>Catarrhini</taxon>
        <taxon>Hominidae</taxon>
        <taxon>Homo</taxon>
    </lineage>
</organism>